<dbReference type="EMBL" id="X91199">
    <property type="protein sequence ID" value="CAA62606.1"/>
    <property type="molecule type" value="Genomic_DNA"/>
</dbReference>
<dbReference type="EMBL" id="X92752">
    <property type="protein sequence ID" value="CAA63409.1"/>
    <property type="molecule type" value="Genomic_DNA"/>
</dbReference>
<dbReference type="RefSeq" id="WP_023192974.1">
    <property type="nucleotide sequence ID" value="NZ_RIQP01000116.1"/>
</dbReference>
<dbReference type="SMR" id="P38059"/>
<dbReference type="ABCD" id="P38059">
    <property type="antibodies" value="1 sequenced antibody"/>
</dbReference>
<dbReference type="GO" id="GO:0005576">
    <property type="term" value="C:extracellular region"/>
    <property type="evidence" value="ECO:0007669"/>
    <property type="project" value="UniProtKB-KW"/>
</dbReference>
<dbReference type="GO" id="GO:0009274">
    <property type="term" value="C:peptidoglycan-based cell wall"/>
    <property type="evidence" value="ECO:0007669"/>
    <property type="project" value="InterPro"/>
</dbReference>
<dbReference type="GO" id="GO:0030115">
    <property type="term" value="C:S-layer"/>
    <property type="evidence" value="ECO:0007669"/>
    <property type="project" value="UniProtKB-SubCell"/>
</dbReference>
<dbReference type="GO" id="GO:0005199">
    <property type="term" value="F:structural constituent of cell wall"/>
    <property type="evidence" value="ECO:0007669"/>
    <property type="project" value="InterPro"/>
</dbReference>
<dbReference type="InterPro" id="IPR004903">
    <property type="entry name" value="S-layer_prot"/>
</dbReference>
<dbReference type="InterPro" id="IPR024968">
    <property type="entry name" value="SlpA_C_lactobacillus"/>
</dbReference>
<dbReference type="InterPro" id="IPR055005">
    <property type="entry name" value="SlpA_D2"/>
</dbReference>
<dbReference type="InterPro" id="IPR055006">
    <property type="entry name" value="SlpA_N"/>
</dbReference>
<dbReference type="Pfam" id="PF03217">
    <property type="entry name" value="SlpA"/>
    <property type="match status" value="2"/>
</dbReference>
<dbReference type="Pfam" id="PF22797">
    <property type="entry name" value="SlpA_D2"/>
    <property type="match status" value="1"/>
</dbReference>
<dbReference type="Pfam" id="PF22796">
    <property type="entry name" value="SlpA_N"/>
    <property type="match status" value="1"/>
</dbReference>
<dbReference type="PIRSF" id="PIRSF037863">
    <property type="entry name" value="SLAP"/>
    <property type="match status" value="1"/>
</dbReference>
<dbReference type="PRINTS" id="PR01729">
    <property type="entry name" value="SURFACELAYER"/>
</dbReference>
<feature type="signal peptide" evidence="1">
    <location>
        <begin position="1"/>
        <end position="30"/>
    </location>
</feature>
<feature type="chain" id="PRO_0000032638" description="S-layer protein">
    <location>
        <begin position="31"/>
        <end position="439"/>
    </location>
</feature>
<feature type="sequence variant" description="In strain: CNRZ 1269.">
    <original>Q</original>
    <variation>P</variation>
    <location>
        <position position="242"/>
    </location>
</feature>
<sequence length="439" mass="46688">MKKNLRIVSAAAAALLAVAPIAATAMPVNAATTINADSAINANTNAKYDVDVTPSISAIAAVAKSDTMPAIPGSLTGSISASYNGKSYTANLPKDSGNATITDSNNNTVKPAELEADKAYTVTVPDVSFNFGSENAGKEITIGSANPNVTFTEKTGDQPASTVKVTLDQDGVAKLSSVQIKNVYAIDTTYNSNVNFYDVTTGATVTTGAVSIDADNQGQLNITSVVAAINSKYFAAQYDKKQLTNVTFDTETAVKDALKAQKIEVSSVGYFKAPHTFTVNVKATSNKNGKSATLPVTVTVPNVADPVVPSQSKTIMHNAYFYDKDAKRVGTDKVTRYNTVTVAMNTTKLANGISYYEVIENGKATGKYINADNIDGTKRTLKHNAYVYKTSKKRANKVVLKKGTEVTTYGGSYKFKNGQRYYKIGANTEKTYVKVANFE</sequence>
<evidence type="ECO:0000269" key="1">
    <source ref="2"/>
</evidence>
<organism>
    <name type="scientific">Lactobacillus helveticus</name>
    <name type="common">Lactobacillus suntoryeus</name>
    <dbReference type="NCBI Taxonomy" id="1587"/>
    <lineage>
        <taxon>Bacteria</taxon>
        <taxon>Bacillati</taxon>
        <taxon>Bacillota</taxon>
        <taxon>Bacilli</taxon>
        <taxon>Lactobacillales</taxon>
        <taxon>Lactobacillaceae</taxon>
        <taxon>Lactobacillus</taxon>
    </lineage>
</organism>
<name>SLAP_LACHE</name>
<reference key="1">
    <citation type="submission" date="1995-11" db="EMBL/GenBank/DDBJ databases">
        <authorList>
            <person name="Callegari M.L."/>
            <person name="Cocconcelli P.S."/>
            <person name="Morelli L."/>
        </authorList>
    </citation>
    <scope>NUCLEOTIDE SEQUENCE [GENOMIC DNA]</scope>
    <source>
        <strain>CNRZ 1269</strain>
        <strain>CNRZ 892</strain>
    </source>
</reference>
<reference key="2">
    <citation type="journal article" date="1992" name="J. Gen. Microbiol.">
        <title>S-layer of Lactobacillus helveticus ATCC 12046: isolation, chemical characterization and re-formation after extraction with lithium chloride.</title>
        <authorList>
            <person name="Lortal S."/>
            <person name="van Heijenoort J."/>
            <person name="Gruber K."/>
            <person name="Sleytr U.B."/>
        </authorList>
    </citation>
    <scope>PROTEIN SEQUENCE OF 31-53</scope>
    <source>
        <strain>ATCC 12046 / BCRC 12259 / JCM 1554 / NCIMB 8733 / H-80</strain>
    </source>
</reference>
<accession>P38059</accession>
<comment type="function">
    <text>The S-layer is a paracrystalline mono-layered assembly of proteins which coat the surface of bacteria.</text>
</comment>
<comment type="subcellular location">
    <subcellularLocation>
        <location>Secreted</location>
        <location>Cell wall</location>
        <location>S-layer</location>
    </subcellularLocation>
    <text>This bacterium is covered by a S-layer with hexagonal symmetry.</text>
</comment>
<comment type="PTM">
    <text>Glycosylated.</text>
</comment>
<protein>
    <recommendedName>
        <fullName>S-layer protein</fullName>
    </recommendedName>
    <alternativeName>
        <fullName>Surface layer protein</fullName>
    </alternativeName>
</protein>
<keyword id="KW-0134">Cell wall</keyword>
<keyword id="KW-0903">Direct protein sequencing</keyword>
<keyword id="KW-0325">Glycoprotein</keyword>
<keyword id="KW-0701">S-layer</keyword>
<keyword id="KW-0964">Secreted</keyword>
<keyword id="KW-0732">Signal</keyword>
<proteinExistence type="evidence at protein level"/>
<gene>
    <name type="primary">slpH</name>
</gene>